<keyword id="KW-0472">Membrane</keyword>
<keyword id="KW-0539">Nucleus</keyword>
<keyword id="KW-1185">Reference proteome</keyword>
<keyword id="KW-0812">Transmembrane</keyword>
<keyword id="KW-1133">Transmembrane helix</keyword>
<accession>O13681</accession>
<gene>
    <name type="primary">IMA1</name>
    <name type="ORF">SPCC737.03c</name>
</gene>
<evidence type="ECO:0000255" key="1"/>
<evidence type="ECO:0000256" key="2">
    <source>
        <dbReference type="SAM" id="MobiDB-lite"/>
    </source>
</evidence>
<evidence type="ECO:0000269" key="3">
    <source>
    </source>
</evidence>
<organism>
    <name type="scientific">Schizosaccharomyces pombe (strain 972 / ATCC 24843)</name>
    <name type="common">Fission yeast</name>
    <dbReference type="NCBI Taxonomy" id="284812"/>
    <lineage>
        <taxon>Eukaryota</taxon>
        <taxon>Fungi</taxon>
        <taxon>Dikarya</taxon>
        <taxon>Ascomycota</taxon>
        <taxon>Taphrinomycotina</taxon>
        <taxon>Schizosaccharomycetes</taxon>
        <taxon>Schizosaccharomycetales</taxon>
        <taxon>Schizosaccharomycetaceae</taxon>
        <taxon>Schizosaccharomyces</taxon>
    </lineage>
</organism>
<dbReference type="EMBL" id="CU329672">
    <property type="protein sequence ID" value="CAA20860.1"/>
    <property type="molecule type" value="Genomic_DNA"/>
</dbReference>
<dbReference type="PIR" id="T41576">
    <property type="entry name" value="T41576"/>
</dbReference>
<dbReference type="RefSeq" id="NP_588365.1">
    <property type="nucleotide sequence ID" value="NM_001023356.2"/>
</dbReference>
<dbReference type="BioGRID" id="275756">
    <property type="interactions" value="167"/>
</dbReference>
<dbReference type="STRING" id="284812.O13681"/>
<dbReference type="iPTMnet" id="O13681"/>
<dbReference type="PaxDb" id="4896-SPCC737.03c.1"/>
<dbReference type="EnsemblFungi" id="SPCC737.03c.1">
    <property type="protein sequence ID" value="SPCC737.03c.1:pep"/>
    <property type="gene ID" value="SPCC737.03c"/>
</dbReference>
<dbReference type="GeneID" id="2539185"/>
<dbReference type="KEGG" id="spo:2539185"/>
<dbReference type="PomBase" id="SPCC737.03c"/>
<dbReference type="VEuPathDB" id="FungiDB:SPCC737.03c"/>
<dbReference type="eggNOG" id="KOG4623">
    <property type="taxonomic scope" value="Eukaryota"/>
</dbReference>
<dbReference type="HOGENOM" id="CLU_444202_0_0_1"/>
<dbReference type="InParanoid" id="O13681"/>
<dbReference type="OMA" id="GAMITWL"/>
<dbReference type="PRO" id="PR:O13681"/>
<dbReference type="Proteomes" id="UP000002485">
    <property type="component" value="Chromosome III"/>
</dbReference>
<dbReference type="GO" id="GO:0034506">
    <property type="term" value="C:chromosome, centromeric core domain"/>
    <property type="evidence" value="ECO:0000314"/>
    <property type="project" value="PomBase"/>
</dbReference>
<dbReference type="GO" id="GO:0034992">
    <property type="term" value="C:microtubule organizing center attachment site"/>
    <property type="evidence" value="ECO:0000314"/>
    <property type="project" value="PomBase"/>
</dbReference>
<dbReference type="GO" id="GO:0044732">
    <property type="term" value="C:mitotic spindle pole body"/>
    <property type="evidence" value="ECO:0000314"/>
    <property type="project" value="PomBase"/>
</dbReference>
<dbReference type="GO" id="GO:0005637">
    <property type="term" value="C:nuclear inner membrane"/>
    <property type="evidence" value="ECO:0000269"/>
    <property type="project" value="PomBase"/>
</dbReference>
<dbReference type="GO" id="GO:0031965">
    <property type="term" value="C:nuclear membrane"/>
    <property type="evidence" value="ECO:0000314"/>
    <property type="project" value="PomBase"/>
</dbReference>
<dbReference type="GO" id="GO:0071765">
    <property type="term" value="P:nuclear inner membrane organization"/>
    <property type="evidence" value="ECO:0000316"/>
    <property type="project" value="PomBase"/>
</dbReference>
<dbReference type="InterPro" id="IPR042321">
    <property type="entry name" value="Ima1"/>
</dbReference>
<dbReference type="InterPro" id="IPR018617">
    <property type="entry name" value="Ima1_N"/>
</dbReference>
<dbReference type="PANTHER" id="PTHR28538">
    <property type="entry name" value="INTEGRAL INNER NUCLEAR MEMBRANE PROTEIN IMA1"/>
    <property type="match status" value="1"/>
</dbReference>
<dbReference type="PANTHER" id="PTHR28538:SF1">
    <property type="entry name" value="INTEGRAL INNER NUCLEAR MEMBRANE PROTEIN IMA1"/>
    <property type="match status" value="1"/>
</dbReference>
<dbReference type="Pfam" id="PF09779">
    <property type="entry name" value="Ima1_N"/>
    <property type="match status" value="1"/>
</dbReference>
<name>IINMP_SCHPO</name>
<comment type="function">
    <text evidence="3">Inner nuclear membrane protein that specifically binds to heterochromatic regions and promotes the tethering of centromeric DNA to the SUN-KASH complex. Couples centromeres to the nuclear envelope, thus contributing to their association with the microtubule organizing center attachment site and to the positioning of the nucleus at the cell center by microtubules.</text>
</comment>
<comment type="subcellular location">
    <subcellularLocation>
        <location evidence="3">Nucleus inner membrane</location>
        <topology evidence="3">Multi-pass membrane protein</topology>
    </subcellularLocation>
</comment>
<proteinExistence type="predicted"/>
<feature type="chain" id="PRO_0000116805" description="Integral inner nuclear membrane protein ima1">
    <location>
        <begin position="1"/>
        <end position="615"/>
    </location>
</feature>
<feature type="transmembrane region" description="Helical" evidence="1">
    <location>
        <begin position="192"/>
        <end position="212"/>
    </location>
</feature>
<feature type="transmembrane region" description="Helical" evidence="1">
    <location>
        <begin position="247"/>
        <end position="267"/>
    </location>
</feature>
<feature type="transmembrane region" description="Helical" evidence="1">
    <location>
        <begin position="323"/>
        <end position="343"/>
    </location>
</feature>
<feature type="transmembrane region" description="Helical" evidence="1">
    <location>
        <begin position="563"/>
        <end position="583"/>
    </location>
</feature>
<feature type="transmembrane region" description="Helical" evidence="1">
    <location>
        <begin position="586"/>
        <end position="606"/>
    </location>
</feature>
<feature type="region of interest" description="Disordered" evidence="2">
    <location>
        <begin position="357"/>
        <end position="387"/>
    </location>
</feature>
<feature type="compositionally biased region" description="Basic and acidic residues" evidence="2">
    <location>
        <begin position="374"/>
        <end position="384"/>
    </location>
</feature>
<sequence>MESSRLFTLGLGNSDDGLKSTFGDKTVTCFYCNKKKEKIRDGTSTWTCSICEATNHIDEKGDILDYRPPTPTQDKGVGPFYAIRDFPSSSSFQSPFCEKCQMNQLIVNRMLADYLPDSSHPDYQAYEKALPEYKKSIEEKFPIVCSECYDSVQDQLDANDYEAKNQVLGYWLQKSKEQLNAKVPHHYPKASFVLWLLRGFGFSFFYLQSIVWHLYHSMIISLLPDGIRNLFLKAISYFLLDGSSSKIFYFNWLGFFVVFWNPYWYKMMDNPSWELFGRDQYIQCQALYLIIRLTCLYLLSCYESEILNLSSDTNLESDFLLRQIHAAFFFVTICFTWISISCLKPSPPPEVHLTGEILKPRKKRQESTSSVHRIGKESSDRKDGISGQNKLQQFATISILNNTNATSHLGNQSVRERAPEESPMTFLQKKMAALPTSSPVRPMLKPTLQLQNSPLSKLVPQEVGNKVNDSIHTTSNQPSKFSLNPSISLKGDNVIEKNLPFSVSTLKSTAKKDTGKAGDGQNREIQNEPVSLESHFSKSLALQNDPTEVIQVKNVLHRNRRNAKLLIAFTILFLVGLICGWRLNRFTMFIYYLCILVLATYYVMKHNFYPLRKVA</sequence>
<reference key="1">
    <citation type="journal article" date="2002" name="Nature">
        <title>The genome sequence of Schizosaccharomyces pombe.</title>
        <authorList>
            <person name="Wood V."/>
            <person name="Gwilliam R."/>
            <person name="Rajandream M.A."/>
            <person name="Lyne M.H."/>
            <person name="Lyne R."/>
            <person name="Stewart A."/>
            <person name="Sgouros J.G."/>
            <person name="Peat N."/>
            <person name="Hayles J."/>
            <person name="Baker S.G."/>
            <person name="Basham D."/>
            <person name="Bowman S."/>
            <person name="Brooks K."/>
            <person name="Brown D."/>
            <person name="Brown S."/>
            <person name="Chillingworth T."/>
            <person name="Churcher C.M."/>
            <person name="Collins M."/>
            <person name="Connor R."/>
            <person name="Cronin A."/>
            <person name="Davis P."/>
            <person name="Feltwell T."/>
            <person name="Fraser A."/>
            <person name="Gentles S."/>
            <person name="Goble A."/>
            <person name="Hamlin N."/>
            <person name="Harris D.E."/>
            <person name="Hidalgo J."/>
            <person name="Hodgson G."/>
            <person name="Holroyd S."/>
            <person name="Hornsby T."/>
            <person name="Howarth S."/>
            <person name="Huckle E.J."/>
            <person name="Hunt S."/>
            <person name="Jagels K."/>
            <person name="James K.D."/>
            <person name="Jones L."/>
            <person name="Jones M."/>
            <person name="Leather S."/>
            <person name="McDonald S."/>
            <person name="McLean J."/>
            <person name="Mooney P."/>
            <person name="Moule S."/>
            <person name="Mungall K.L."/>
            <person name="Murphy L.D."/>
            <person name="Niblett D."/>
            <person name="Odell C."/>
            <person name="Oliver K."/>
            <person name="O'Neil S."/>
            <person name="Pearson D."/>
            <person name="Quail M.A."/>
            <person name="Rabbinowitsch E."/>
            <person name="Rutherford K.M."/>
            <person name="Rutter S."/>
            <person name="Saunders D."/>
            <person name="Seeger K."/>
            <person name="Sharp S."/>
            <person name="Skelton J."/>
            <person name="Simmonds M.N."/>
            <person name="Squares R."/>
            <person name="Squares S."/>
            <person name="Stevens K."/>
            <person name="Taylor K."/>
            <person name="Taylor R.G."/>
            <person name="Tivey A."/>
            <person name="Walsh S.V."/>
            <person name="Warren T."/>
            <person name="Whitehead S."/>
            <person name="Woodward J.R."/>
            <person name="Volckaert G."/>
            <person name="Aert R."/>
            <person name="Robben J."/>
            <person name="Grymonprez B."/>
            <person name="Weltjens I."/>
            <person name="Vanstreels E."/>
            <person name="Rieger M."/>
            <person name="Schaefer M."/>
            <person name="Mueller-Auer S."/>
            <person name="Gabel C."/>
            <person name="Fuchs M."/>
            <person name="Duesterhoeft A."/>
            <person name="Fritzc C."/>
            <person name="Holzer E."/>
            <person name="Moestl D."/>
            <person name="Hilbert H."/>
            <person name="Borzym K."/>
            <person name="Langer I."/>
            <person name="Beck A."/>
            <person name="Lehrach H."/>
            <person name="Reinhardt R."/>
            <person name="Pohl T.M."/>
            <person name="Eger P."/>
            <person name="Zimmermann W."/>
            <person name="Wedler H."/>
            <person name="Wambutt R."/>
            <person name="Purnelle B."/>
            <person name="Goffeau A."/>
            <person name="Cadieu E."/>
            <person name="Dreano S."/>
            <person name="Gloux S."/>
            <person name="Lelaure V."/>
            <person name="Mottier S."/>
            <person name="Galibert F."/>
            <person name="Aves S.J."/>
            <person name="Xiang Z."/>
            <person name="Hunt C."/>
            <person name="Moore K."/>
            <person name="Hurst S.M."/>
            <person name="Lucas M."/>
            <person name="Rochet M."/>
            <person name="Gaillardin C."/>
            <person name="Tallada V.A."/>
            <person name="Garzon A."/>
            <person name="Thode G."/>
            <person name="Daga R.R."/>
            <person name="Cruzado L."/>
            <person name="Jimenez J."/>
            <person name="Sanchez M."/>
            <person name="del Rey F."/>
            <person name="Benito J."/>
            <person name="Dominguez A."/>
            <person name="Revuelta J.L."/>
            <person name="Moreno S."/>
            <person name="Armstrong J."/>
            <person name="Forsburg S.L."/>
            <person name="Cerutti L."/>
            <person name="Lowe T."/>
            <person name="McCombie W.R."/>
            <person name="Paulsen I."/>
            <person name="Potashkin J."/>
            <person name="Shpakovski G.V."/>
            <person name="Ussery D."/>
            <person name="Barrell B.G."/>
            <person name="Nurse P."/>
        </authorList>
    </citation>
    <scope>NUCLEOTIDE SEQUENCE [LARGE SCALE GENOMIC DNA]</scope>
    <source>
        <strain>972 / ATCC 24843</strain>
    </source>
</reference>
<reference key="2">
    <citation type="journal article" date="2008" name="Cell">
        <title>A network of nuclear envelope membrane proteins linking centromeres to microtubules.</title>
        <authorList>
            <person name="King M.C."/>
            <person name="Drivas T.G."/>
            <person name="Blobel G."/>
        </authorList>
    </citation>
    <scope>SUBCELLULAR LOCATION</scope>
    <scope>FUNCTION</scope>
</reference>
<protein>
    <recommendedName>
        <fullName>Integral inner nuclear membrane protein ima1</fullName>
    </recommendedName>
</protein>